<feature type="chain" id="PRO_0000208185" description="1-acyl-sn-glycerol-3-phosphate acyltransferase">
    <location>
        <begin position="1"/>
        <end position="308"/>
    </location>
</feature>
<feature type="transmembrane region" description="Helical" evidence="2">
    <location>
        <begin position="65"/>
        <end position="85"/>
    </location>
</feature>
<feature type="transmembrane region" description="Helical" evidence="2">
    <location>
        <begin position="124"/>
        <end position="144"/>
    </location>
</feature>
<feature type="transmembrane region" description="Helical" evidence="2">
    <location>
        <begin position="148"/>
        <end position="168"/>
    </location>
</feature>
<feature type="short sequence motif" description="HXXXXD motif">
    <location>
        <begin position="130"/>
        <end position="135"/>
    </location>
</feature>
<proteinExistence type="evidence at protein level"/>
<accession>Q42670</accession>
<keyword id="KW-0012">Acyltransferase</keyword>
<keyword id="KW-0903">Direct protein sequencing</keyword>
<keyword id="KW-0444">Lipid biosynthesis</keyword>
<keyword id="KW-0443">Lipid metabolism</keyword>
<keyword id="KW-0472">Membrane</keyword>
<keyword id="KW-0594">Phospholipid biosynthesis</keyword>
<keyword id="KW-1208">Phospholipid metabolism</keyword>
<keyword id="KW-0808">Transferase</keyword>
<keyword id="KW-0812">Transmembrane</keyword>
<keyword id="KW-1133">Transmembrane helix</keyword>
<sequence length="308" mass="34809">MDASGASSFLRGRCLESCFKASFGMSQPKDAAGQPSRRPADADDFVDDDRWITVILSVVRIAACFLSMMVTTIVWNMIMLILLPWPYARIRQGNLYGHVTGRMLMWILGNPITIEGSEFSNTRAIYICNHASLVDIFLIMWLIPKGTVTIAKKEIIWYPLFGQLYVLANHQRIDRSNPSAAIESIKEVARAVVKKNLSLIIFPEGTRSKTGRLLPFKKGFIHIALQTRLPIVPMVLTGTHLAWRKNSLRVRPAPITVKYFSPIKTDDWEEEKINHYVEMIHALYVDHLPESQKPLVSKGRDASGRSNS</sequence>
<name>PLSC_COCNU</name>
<dbReference type="EC" id="2.3.1.51"/>
<dbReference type="EMBL" id="U29657">
    <property type="protein sequence ID" value="AAC49119.1"/>
    <property type="molecule type" value="mRNA"/>
</dbReference>
<dbReference type="SMR" id="Q42670"/>
<dbReference type="OrthoDB" id="202234at2759"/>
<dbReference type="BRENDA" id="2.3.1.51">
    <property type="organism ID" value="1556"/>
</dbReference>
<dbReference type="GO" id="GO:0005783">
    <property type="term" value="C:endoplasmic reticulum"/>
    <property type="evidence" value="ECO:0007669"/>
    <property type="project" value="TreeGrafter"/>
</dbReference>
<dbReference type="GO" id="GO:0016020">
    <property type="term" value="C:membrane"/>
    <property type="evidence" value="ECO:0007669"/>
    <property type="project" value="UniProtKB-SubCell"/>
</dbReference>
<dbReference type="GO" id="GO:0003841">
    <property type="term" value="F:1-acylglycerol-3-phosphate O-acyltransferase activity"/>
    <property type="evidence" value="ECO:0007669"/>
    <property type="project" value="UniProtKB-EC"/>
</dbReference>
<dbReference type="GO" id="GO:0006654">
    <property type="term" value="P:phosphatidic acid biosynthetic process"/>
    <property type="evidence" value="ECO:0007669"/>
    <property type="project" value="TreeGrafter"/>
</dbReference>
<dbReference type="CDD" id="cd07989">
    <property type="entry name" value="LPLAT_AGPAT-like"/>
    <property type="match status" value="1"/>
</dbReference>
<dbReference type="InterPro" id="IPR004552">
    <property type="entry name" value="AGP_acyltrans"/>
</dbReference>
<dbReference type="InterPro" id="IPR002123">
    <property type="entry name" value="Plipid/glycerol_acylTrfase"/>
</dbReference>
<dbReference type="NCBIfam" id="TIGR00530">
    <property type="entry name" value="AGP_acyltrn"/>
    <property type="match status" value="1"/>
</dbReference>
<dbReference type="PANTHER" id="PTHR10434">
    <property type="entry name" value="1-ACYL-SN-GLYCEROL-3-PHOSPHATE ACYLTRANSFERASE"/>
    <property type="match status" value="1"/>
</dbReference>
<dbReference type="PANTHER" id="PTHR10434:SF11">
    <property type="entry name" value="1-ACYL-SN-GLYCEROL-3-PHOSPHATE ACYLTRANSFERASE"/>
    <property type="match status" value="1"/>
</dbReference>
<dbReference type="Pfam" id="PF01553">
    <property type="entry name" value="Acyltransferase"/>
    <property type="match status" value="1"/>
</dbReference>
<dbReference type="SMART" id="SM00563">
    <property type="entry name" value="PlsC"/>
    <property type="match status" value="1"/>
</dbReference>
<dbReference type="SUPFAM" id="SSF69593">
    <property type="entry name" value="Glycerol-3-phosphate (1)-acyltransferase"/>
    <property type="match status" value="1"/>
</dbReference>
<reference key="1">
    <citation type="journal article" date="1995" name="Plant Physiol.">
        <title>Cloning of a coconut endosperm cDNA encoding a 1-acyl-sn-glycerol-3-phosphate acyltransferase that accepts medium-chain-length substrates.</title>
        <authorList>
            <person name="Knutzon D.S."/>
            <person name="Lardizabal K.D."/>
            <person name="Nelsen J.S."/>
            <person name="Bleibaum J.L."/>
            <person name="Davies H.M."/>
            <person name="Metz J.G."/>
        </authorList>
    </citation>
    <scope>NUCLEOTIDE SEQUENCE [MRNA]</scope>
    <scope>PARTIAL PROTEIN SEQUENCE</scope>
    <source>
        <tissue>Endosperm</tissue>
    </source>
</reference>
<evidence type="ECO:0000250" key="1"/>
<evidence type="ECO:0000255" key="2"/>
<evidence type="ECO:0000305" key="3"/>
<organism>
    <name type="scientific">Cocos nucifera</name>
    <name type="common">Coconut palm</name>
    <dbReference type="NCBI Taxonomy" id="13894"/>
    <lineage>
        <taxon>Eukaryota</taxon>
        <taxon>Viridiplantae</taxon>
        <taxon>Streptophyta</taxon>
        <taxon>Embryophyta</taxon>
        <taxon>Tracheophyta</taxon>
        <taxon>Spermatophyta</taxon>
        <taxon>Magnoliopsida</taxon>
        <taxon>Liliopsida</taxon>
        <taxon>Arecaceae</taxon>
        <taxon>Arecoideae</taxon>
        <taxon>Cocoseae</taxon>
        <taxon>Attaleinae</taxon>
        <taxon>Cocos</taxon>
    </lineage>
</organism>
<comment type="function">
    <text>Converts lysophosphatidic acid (LPA) into phosphatidic acid by incorporating acyl moiety at the 2 position. This enzyme shows a preference for medium-chain-length fatty acyl-coenzyme a substrates.</text>
</comment>
<comment type="catalytic activity">
    <reaction>
        <text>a 1-acyl-sn-glycero-3-phosphate + an acyl-CoA = a 1,2-diacyl-sn-glycero-3-phosphate + CoA</text>
        <dbReference type="Rhea" id="RHEA:19709"/>
        <dbReference type="ChEBI" id="CHEBI:57287"/>
        <dbReference type="ChEBI" id="CHEBI:57970"/>
        <dbReference type="ChEBI" id="CHEBI:58342"/>
        <dbReference type="ChEBI" id="CHEBI:58608"/>
        <dbReference type="EC" id="2.3.1.51"/>
    </reaction>
</comment>
<comment type="subcellular location">
    <subcellularLocation>
        <location evidence="3">Membrane</location>
        <topology evidence="3">Multi-pass membrane protein</topology>
    </subcellularLocation>
</comment>
<comment type="domain">
    <text evidence="1">The HXXXXD motif is essential for acyltransferase activity and may constitute the binding site for the phosphate moiety of the glycerol-3-phosphate.</text>
</comment>
<comment type="similarity">
    <text evidence="3">Belongs to the 1-acyl-sn-glycerol-3-phosphate acyltransferase family.</text>
</comment>
<protein>
    <recommendedName>
        <fullName>1-acyl-sn-glycerol-3-phosphate acyltransferase</fullName>
        <shortName>1-AGP acyltransferase</shortName>
        <shortName>1-AGPAT</shortName>
        <ecNumber>2.3.1.51</ecNumber>
    </recommendedName>
    <alternativeName>
        <fullName>Lysophosphatidic acid acyltransferase</fullName>
        <shortName>LPAAT</shortName>
    </alternativeName>
</protein>